<comment type="function">
    <text evidence="1">Necessary for the introduction of cis unsaturation into fatty acids. Catalyzes the dehydration of (3R)-3-hydroxydecanoyl-ACP to E-(2)-decenoyl-ACP and then its isomerization to Z-(3)-decenoyl-ACP. Can catalyze the dehydratase reaction for beta-hydroxyacyl-ACPs with saturated chain lengths up to 16:0, being most active on intermediate chain length (By similarity).</text>
</comment>
<comment type="catalytic activity">
    <reaction>
        <text>a (3R)-hydroxyacyl-[ACP] = a (2E)-enoyl-[ACP] + H2O</text>
        <dbReference type="Rhea" id="RHEA:13097"/>
        <dbReference type="Rhea" id="RHEA-COMP:9925"/>
        <dbReference type="Rhea" id="RHEA-COMP:9945"/>
        <dbReference type="ChEBI" id="CHEBI:15377"/>
        <dbReference type="ChEBI" id="CHEBI:78784"/>
        <dbReference type="ChEBI" id="CHEBI:78827"/>
        <dbReference type="EC" id="4.2.1.59"/>
    </reaction>
</comment>
<comment type="catalytic activity">
    <reaction>
        <text>(3R)-hydroxydecanoyl-[ACP] = (2E)-decenoyl-[ACP] + H2O</text>
        <dbReference type="Rhea" id="RHEA:41860"/>
        <dbReference type="Rhea" id="RHEA-COMP:9638"/>
        <dbReference type="Rhea" id="RHEA-COMP:9639"/>
        <dbReference type="ChEBI" id="CHEBI:15377"/>
        <dbReference type="ChEBI" id="CHEBI:78466"/>
        <dbReference type="ChEBI" id="CHEBI:78467"/>
    </reaction>
</comment>
<comment type="catalytic activity">
    <reaction>
        <text>(2E)-decenoyl-[ACP] = (3Z)-decenoyl-[ACP]</text>
        <dbReference type="Rhea" id="RHEA:23568"/>
        <dbReference type="Rhea" id="RHEA-COMP:9639"/>
        <dbReference type="Rhea" id="RHEA-COMP:9927"/>
        <dbReference type="ChEBI" id="CHEBI:78467"/>
        <dbReference type="ChEBI" id="CHEBI:78798"/>
        <dbReference type="EC" id="5.3.3.14"/>
    </reaction>
</comment>
<comment type="pathway">
    <text>Lipid metabolism; fatty acid biosynthesis.</text>
</comment>
<comment type="subunit">
    <text evidence="1">Homodimer.</text>
</comment>
<comment type="subcellular location">
    <subcellularLocation>
        <location evidence="1">Cytoplasm</location>
    </subcellularLocation>
</comment>
<comment type="similarity">
    <text evidence="2">Belongs to the thioester dehydratase family. FabA subfamily.</text>
</comment>
<comment type="sequence caution" evidence="2">
    <conflict type="erroneous initiation">
        <sequence resource="EMBL-CDS" id="AAN79558"/>
    </conflict>
</comment>
<dbReference type="EC" id="4.2.1.59"/>
<dbReference type="EC" id="5.3.3.14"/>
<dbReference type="EMBL" id="AE014075">
    <property type="protein sequence ID" value="AAN79558.1"/>
    <property type="status" value="ALT_INIT"/>
    <property type="molecule type" value="Genomic_DNA"/>
</dbReference>
<dbReference type="RefSeq" id="WP_000227926.1">
    <property type="nucleotide sequence ID" value="NZ_CP051263.1"/>
</dbReference>
<dbReference type="SMR" id="Q8FJ83"/>
<dbReference type="STRING" id="199310.c1090"/>
<dbReference type="GeneID" id="93245035"/>
<dbReference type="KEGG" id="ecc:c1090"/>
<dbReference type="eggNOG" id="COG0764">
    <property type="taxonomic scope" value="Bacteria"/>
</dbReference>
<dbReference type="HOGENOM" id="CLU_097925_0_0_6"/>
<dbReference type="UniPathway" id="UPA00094"/>
<dbReference type="Proteomes" id="UP000001410">
    <property type="component" value="Chromosome"/>
</dbReference>
<dbReference type="GO" id="GO:0005737">
    <property type="term" value="C:cytoplasm"/>
    <property type="evidence" value="ECO:0007669"/>
    <property type="project" value="UniProtKB-SubCell"/>
</dbReference>
<dbReference type="GO" id="GO:0019171">
    <property type="term" value="F:(3R)-hydroxyacyl-[acyl-carrier-protein] dehydratase activity"/>
    <property type="evidence" value="ECO:0007669"/>
    <property type="project" value="UniProtKB-UniRule"/>
</dbReference>
<dbReference type="GO" id="GO:0034017">
    <property type="term" value="F:trans-2-decenoyl-acyl-carrier-protein isomerase activity"/>
    <property type="evidence" value="ECO:0007669"/>
    <property type="project" value="UniProtKB-UniRule"/>
</dbReference>
<dbReference type="GO" id="GO:0006636">
    <property type="term" value="P:unsaturated fatty acid biosynthetic process"/>
    <property type="evidence" value="ECO:0007669"/>
    <property type="project" value="UniProtKB-UniRule"/>
</dbReference>
<dbReference type="CDD" id="cd01287">
    <property type="entry name" value="FabA"/>
    <property type="match status" value="1"/>
</dbReference>
<dbReference type="FunFam" id="3.10.129.10:FF:000003">
    <property type="entry name" value="3-hydroxydecanoyl-[acyl-carrier-protein] dehydratase"/>
    <property type="match status" value="1"/>
</dbReference>
<dbReference type="Gene3D" id="3.10.129.10">
    <property type="entry name" value="Hotdog Thioesterase"/>
    <property type="match status" value="1"/>
</dbReference>
<dbReference type="HAMAP" id="MF_00405">
    <property type="entry name" value="FabA"/>
    <property type="match status" value="1"/>
</dbReference>
<dbReference type="InterPro" id="IPR010083">
    <property type="entry name" value="FabA"/>
</dbReference>
<dbReference type="InterPro" id="IPR013114">
    <property type="entry name" value="FabA_FabZ"/>
</dbReference>
<dbReference type="InterPro" id="IPR029069">
    <property type="entry name" value="HotDog_dom_sf"/>
</dbReference>
<dbReference type="NCBIfam" id="TIGR01749">
    <property type="entry name" value="fabA"/>
    <property type="match status" value="1"/>
</dbReference>
<dbReference type="NCBIfam" id="NF003509">
    <property type="entry name" value="PRK05174.1"/>
    <property type="match status" value="1"/>
</dbReference>
<dbReference type="PANTHER" id="PTHR30272">
    <property type="entry name" value="3-HYDROXYACYL-[ACYL-CARRIER-PROTEIN] DEHYDRATASE"/>
    <property type="match status" value="1"/>
</dbReference>
<dbReference type="PANTHER" id="PTHR30272:SF8">
    <property type="entry name" value="3-HYDROXYDECANOYL-[ACYL-CARRIER-PROTEIN] DEHYDRATASE"/>
    <property type="match status" value="1"/>
</dbReference>
<dbReference type="Pfam" id="PF07977">
    <property type="entry name" value="FabA"/>
    <property type="match status" value="1"/>
</dbReference>
<dbReference type="SUPFAM" id="SSF54637">
    <property type="entry name" value="Thioesterase/thiol ester dehydrase-isomerase"/>
    <property type="match status" value="1"/>
</dbReference>
<proteinExistence type="inferred from homology"/>
<organism>
    <name type="scientific">Escherichia coli O6:H1 (strain CFT073 / ATCC 700928 / UPEC)</name>
    <dbReference type="NCBI Taxonomy" id="199310"/>
    <lineage>
        <taxon>Bacteria</taxon>
        <taxon>Pseudomonadati</taxon>
        <taxon>Pseudomonadota</taxon>
        <taxon>Gammaproteobacteria</taxon>
        <taxon>Enterobacterales</taxon>
        <taxon>Enterobacteriaceae</taxon>
        <taxon>Escherichia</taxon>
    </lineage>
</organism>
<reference key="1">
    <citation type="journal article" date="2002" name="Proc. Natl. Acad. Sci. U.S.A.">
        <title>Extensive mosaic structure revealed by the complete genome sequence of uropathogenic Escherichia coli.</title>
        <authorList>
            <person name="Welch R.A."/>
            <person name="Burland V."/>
            <person name="Plunkett G. III"/>
            <person name="Redford P."/>
            <person name="Roesch P."/>
            <person name="Rasko D."/>
            <person name="Buckles E.L."/>
            <person name="Liou S.-R."/>
            <person name="Boutin A."/>
            <person name="Hackett J."/>
            <person name="Stroud D."/>
            <person name="Mayhew G.F."/>
            <person name="Rose D.J."/>
            <person name="Zhou S."/>
            <person name="Schwartz D.C."/>
            <person name="Perna N.T."/>
            <person name="Mobley H.L.T."/>
            <person name="Donnenberg M.S."/>
            <person name="Blattner F.R."/>
        </authorList>
    </citation>
    <scope>NUCLEOTIDE SEQUENCE [LARGE SCALE GENOMIC DNA]</scope>
    <source>
        <strain>CFT073 / ATCC 700928 / UPEC</strain>
    </source>
</reference>
<protein>
    <recommendedName>
        <fullName>3-hydroxydecanoyl-[acyl-carrier-protein] dehydratase</fullName>
        <ecNumber>4.2.1.59</ecNumber>
    </recommendedName>
    <alternativeName>
        <fullName>3-hydroxyacyl-[acyl-carrier-protein] dehydratase FabA</fullName>
    </alternativeName>
    <alternativeName>
        <fullName>Beta-hydroxydecanoyl thioester dehydrase</fullName>
    </alternativeName>
    <alternativeName>
        <fullName>Trans-2-decenoyl-[acyl-carrier-protein] isomerase</fullName>
        <ecNumber>5.3.3.14</ecNumber>
    </alternativeName>
</protein>
<sequence>MVDKRESYTKEDLLASGRGELFGAKGPQLPAPNMLMMDRVVKMTETGGNFDKGYVEAELDINPDLWFFGCHFIGDPVMPGCLGLDAMWQLVGFYLGWLGGEGKGRALGVGEVKFTGQVLPTAKKVTYRIHFKRIVNRRLIMGLADGEVLVDGRLIYTANDLKVGLFQDTSAF</sequence>
<keyword id="KW-0963">Cytoplasm</keyword>
<keyword id="KW-0275">Fatty acid biosynthesis</keyword>
<keyword id="KW-0276">Fatty acid metabolism</keyword>
<keyword id="KW-0413">Isomerase</keyword>
<keyword id="KW-0444">Lipid biosynthesis</keyword>
<keyword id="KW-0443">Lipid metabolism</keyword>
<keyword id="KW-0456">Lyase</keyword>
<keyword id="KW-1185">Reference proteome</keyword>
<gene>
    <name type="primary">fabA</name>
    <name type="ordered locus">c1090</name>
</gene>
<accession>Q8FJ83</accession>
<feature type="initiator methionine" description="Removed" evidence="1">
    <location>
        <position position="1"/>
    </location>
</feature>
<feature type="chain" id="PRO_0000091596" description="3-hydroxydecanoyl-[acyl-carrier-protein] dehydratase">
    <location>
        <begin position="2"/>
        <end position="172"/>
    </location>
</feature>
<feature type="active site" evidence="1">
    <location>
        <position position="71"/>
    </location>
</feature>
<name>FABA_ECOL6</name>
<evidence type="ECO:0000250" key="1"/>
<evidence type="ECO:0000305" key="2"/>